<evidence type="ECO:0000250" key="1"/>
<evidence type="ECO:0000255" key="2">
    <source>
        <dbReference type="PROSITE-ProRule" id="PRU00160"/>
    </source>
</evidence>
<evidence type="ECO:0000255" key="3">
    <source>
        <dbReference type="PROSITE-ProRule" id="PRU10044"/>
    </source>
</evidence>
<evidence type="ECO:0000305" key="4"/>
<organism>
    <name type="scientific">Styela plicata</name>
    <name type="common">Wrinkled sea squirt</name>
    <name type="synonym">Ascidia plicata</name>
    <dbReference type="NCBI Taxonomy" id="7726"/>
    <lineage>
        <taxon>Eukaryota</taxon>
        <taxon>Metazoa</taxon>
        <taxon>Chordata</taxon>
        <taxon>Tunicata</taxon>
        <taxon>Ascidiacea</taxon>
        <taxon>Stolidobranchia</taxon>
        <taxon>Styelidae</taxon>
        <taxon>Styela</taxon>
    </lineage>
</organism>
<name>PTP17_STYPL</name>
<dbReference type="EC" id="3.1.3.48"/>
<dbReference type="EMBL" id="M38002">
    <property type="protein sequence ID" value="AAA29835.1"/>
    <property type="molecule type" value="mRNA"/>
</dbReference>
<dbReference type="SMR" id="P28209"/>
<dbReference type="GO" id="GO:0004725">
    <property type="term" value="F:protein tyrosine phosphatase activity"/>
    <property type="evidence" value="ECO:0007669"/>
    <property type="project" value="UniProtKB-EC"/>
</dbReference>
<dbReference type="CDD" id="cd00047">
    <property type="entry name" value="PTPc"/>
    <property type="match status" value="1"/>
</dbReference>
<dbReference type="Gene3D" id="3.90.190.10">
    <property type="entry name" value="Protein tyrosine phosphatase superfamily"/>
    <property type="match status" value="1"/>
</dbReference>
<dbReference type="InterPro" id="IPR029021">
    <property type="entry name" value="Prot-tyrosine_phosphatase-like"/>
</dbReference>
<dbReference type="InterPro" id="IPR050348">
    <property type="entry name" value="Protein-Tyr_Phosphatase"/>
</dbReference>
<dbReference type="InterPro" id="IPR000242">
    <property type="entry name" value="PTP_cat"/>
</dbReference>
<dbReference type="PANTHER" id="PTHR19134:SF562">
    <property type="entry name" value="PROTEIN-TYROSINE-PHOSPHATASE"/>
    <property type="match status" value="1"/>
</dbReference>
<dbReference type="PANTHER" id="PTHR19134">
    <property type="entry name" value="RECEPTOR-TYPE TYROSINE-PROTEIN PHOSPHATASE"/>
    <property type="match status" value="1"/>
</dbReference>
<dbReference type="Pfam" id="PF00102">
    <property type="entry name" value="Y_phosphatase"/>
    <property type="match status" value="1"/>
</dbReference>
<dbReference type="SUPFAM" id="SSF52799">
    <property type="entry name" value="(Phosphotyrosine protein) phosphatases II"/>
    <property type="match status" value="1"/>
</dbReference>
<dbReference type="PROSITE" id="PS50055">
    <property type="entry name" value="TYR_PHOSPHATASE_PTP"/>
    <property type="match status" value="1"/>
</dbReference>
<gene>
    <name type="primary">STY-17</name>
</gene>
<sequence>WRMIWEHECCVIAVLTRLTEKKKVKCAQYWSETDNKSSKYGEITVKLRETSSCGDYVRRQFELTKNNMTREVVQFQFIAWPDHGIPVTTSSLFRFHKAVVFSQPHTAGPIVV</sequence>
<comment type="catalytic activity">
    <reaction evidence="3">
        <text>O-phospho-L-tyrosyl-[protein] + H2O = L-tyrosyl-[protein] + phosphate</text>
        <dbReference type="Rhea" id="RHEA:10684"/>
        <dbReference type="Rhea" id="RHEA-COMP:10136"/>
        <dbReference type="Rhea" id="RHEA-COMP:20101"/>
        <dbReference type="ChEBI" id="CHEBI:15377"/>
        <dbReference type="ChEBI" id="CHEBI:43474"/>
        <dbReference type="ChEBI" id="CHEBI:46858"/>
        <dbReference type="ChEBI" id="CHEBI:61978"/>
        <dbReference type="EC" id="3.1.3.48"/>
    </reaction>
</comment>
<comment type="similarity">
    <text evidence="4">Belongs to the protein-tyrosine phosphatase family.</text>
</comment>
<feature type="chain" id="PRO_0000094905" description="Tyrosine-protein phosphatase 17">
    <location>
        <begin position="1" status="less than"/>
        <end position="112" status="greater than"/>
    </location>
</feature>
<feature type="domain" description="Tyrosine-protein phosphatase" evidence="2">
    <location>
        <begin position="1" status="less than"/>
        <end position="112" status="greater than"/>
    </location>
</feature>
<feature type="binding site" evidence="1">
    <location>
        <position position="82"/>
    </location>
    <ligand>
        <name>substrate</name>
    </ligand>
</feature>
<feature type="non-terminal residue">
    <location>
        <position position="1"/>
    </location>
</feature>
<feature type="non-terminal residue">
    <location>
        <position position="112"/>
    </location>
</feature>
<accession>P28209</accession>
<protein>
    <recommendedName>
        <fullName>Tyrosine-protein phosphatase 17</fullName>
        <ecNumber>3.1.3.48</ecNumber>
    </recommendedName>
</protein>
<keyword id="KW-0378">Hydrolase</keyword>
<keyword id="KW-0904">Protein phosphatase</keyword>
<reference key="1">
    <citation type="journal article" date="1991" name="Immunogenetics">
        <title>Protein tyrosine phosphatase domains from the protochordate Styela plicata.</title>
        <authorList>
            <person name="Matthews R.J."/>
            <person name="Flores E."/>
            <person name="Thomas M.L."/>
        </authorList>
    </citation>
    <scope>NUCLEOTIDE SEQUENCE [MRNA]</scope>
</reference>
<proteinExistence type="evidence at transcript level"/>